<evidence type="ECO:0000255" key="1">
    <source>
        <dbReference type="PROSITE-ProRule" id="PRU00152"/>
    </source>
</evidence>
<evidence type="ECO:0000255" key="2">
    <source>
        <dbReference type="PROSITE-ProRule" id="PRU00726"/>
    </source>
</evidence>
<evidence type="ECO:0000269" key="3">
    <source>
    </source>
</evidence>
<evidence type="ECO:0000269" key="4">
    <source>
    </source>
</evidence>
<evidence type="ECO:0000269" key="5">
    <source>
    </source>
</evidence>
<evidence type="ECO:0000269" key="6">
    <source>
    </source>
</evidence>
<evidence type="ECO:0000303" key="7">
    <source>
    </source>
</evidence>
<evidence type="ECO:0000303" key="8">
    <source>
    </source>
</evidence>
<evidence type="ECO:0000305" key="9"/>
<evidence type="ECO:0000305" key="10">
    <source>
    </source>
</evidence>
<evidence type="ECO:0000305" key="11">
    <source>
    </source>
</evidence>
<evidence type="ECO:0000305" key="12">
    <source>
    </source>
</evidence>
<evidence type="ECO:0007829" key="13">
    <source>
        <dbReference type="PDB" id="1U5U"/>
    </source>
</evidence>
<evidence type="ECO:0007829" key="14">
    <source>
        <dbReference type="PDB" id="2FNQ"/>
    </source>
</evidence>
<evidence type="ECO:0007829" key="15">
    <source>
        <dbReference type="PDB" id="3FG1"/>
    </source>
</evidence>
<evidence type="ECO:0007829" key="16">
    <source>
        <dbReference type="PDB" id="3FG4"/>
    </source>
</evidence>
<feature type="chain" id="PRO_0000220724" description="Allene oxide synthase-lipoxygenase protein">
    <location>
        <begin position="1"/>
        <end position="1066"/>
    </location>
</feature>
<feature type="domain" description="PLAT" evidence="1">
    <location>
        <begin position="374"/>
        <end position="490"/>
    </location>
</feature>
<feature type="domain" description="Lipoxygenase" evidence="2">
    <location>
        <begin position="491"/>
        <end position="1066"/>
    </location>
</feature>
<feature type="region of interest" description="Allene oxide synthase">
    <location>
        <begin position="1"/>
        <end position="371"/>
    </location>
</feature>
<feature type="region of interest" description="Arachidonate 8-lipoxygenase">
    <location>
        <begin position="372"/>
        <end position="1066"/>
    </location>
</feature>
<feature type="binding site" description="axial binding residue">
    <location>
        <position position="353"/>
    </location>
    <ligand>
        <name>heme</name>
        <dbReference type="ChEBI" id="CHEBI:30413"/>
    </ligand>
    <ligandPart>
        <name>Fe</name>
        <dbReference type="ChEBI" id="CHEBI:18248"/>
    </ligandPart>
</feature>
<feature type="binding site" evidence="4">
    <location>
        <position position="387"/>
    </location>
    <ligand>
        <name>Ca(2+)</name>
        <dbReference type="ChEBI" id="CHEBI:29108"/>
        <label>1</label>
        <note>structural</note>
    </ligand>
</feature>
<feature type="binding site" evidence="4">
    <location>
        <position position="389"/>
    </location>
    <ligand>
        <name>Ca(2+)</name>
        <dbReference type="ChEBI" id="CHEBI:29108"/>
        <label>1</label>
        <note>structural</note>
    </ligand>
</feature>
<feature type="binding site" evidence="4">
    <location>
        <position position="390"/>
    </location>
    <ligand>
        <name>Ca(2+)</name>
        <dbReference type="ChEBI" id="CHEBI:29108"/>
        <label>2</label>
        <note>structural</note>
    </ligand>
</feature>
<feature type="binding site" evidence="4">
    <location>
        <position position="391"/>
    </location>
    <ligand>
        <name>Ca(2+)</name>
        <dbReference type="ChEBI" id="CHEBI:29108"/>
        <label>2</label>
        <note>structural</note>
    </ligand>
</feature>
<feature type="binding site" evidence="4">
    <location>
        <position position="416"/>
    </location>
    <ligand>
        <name>Ca(2+)</name>
        <dbReference type="ChEBI" id="CHEBI:29108"/>
        <label>2</label>
        <note>structural</note>
    </ligand>
</feature>
<feature type="binding site" evidence="4">
    <location>
        <position position="417"/>
    </location>
    <ligand>
        <name>Ca(2+)</name>
        <dbReference type="ChEBI" id="CHEBI:29108"/>
        <label>2</label>
        <note>structural</note>
    </ligand>
</feature>
<feature type="binding site" evidence="4">
    <location>
        <position position="419"/>
    </location>
    <ligand>
        <name>Ca(2+)</name>
        <dbReference type="ChEBI" id="CHEBI:29108"/>
        <label>2</label>
        <note>structural</note>
    </ligand>
</feature>
<feature type="binding site" evidence="4">
    <location>
        <position position="452"/>
    </location>
    <ligand>
        <name>Ca(2+)</name>
        <dbReference type="ChEBI" id="CHEBI:29108"/>
        <label>1</label>
        <note>structural</note>
    </ligand>
</feature>
<feature type="binding site" evidence="4">
    <location>
        <position position="454"/>
    </location>
    <ligand>
        <name>Ca(2+)</name>
        <dbReference type="ChEBI" id="CHEBI:29108"/>
        <label>1</label>
        <note>structural</note>
    </ligand>
</feature>
<feature type="binding site">
    <location>
        <position position="757"/>
    </location>
    <ligand>
        <name>Fe cation</name>
        <dbReference type="ChEBI" id="CHEBI:24875"/>
        <note>catalytic</note>
    </ligand>
</feature>
<feature type="binding site">
    <location>
        <position position="762"/>
    </location>
    <ligand>
        <name>Fe cation</name>
        <dbReference type="ChEBI" id="CHEBI:24875"/>
        <note>catalytic</note>
    </ligand>
</feature>
<feature type="binding site">
    <location>
        <position position="943"/>
    </location>
    <ligand>
        <name>Fe cation</name>
        <dbReference type="ChEBI" id="CHEBI:24875"/>
        <note>catalytic</note>
    </ligand>
</feature>
<feature type="binding site">
    <location>
        <position position="947"/>
    </location>
    <ligand>
        <name>Fe cation</name>
        <dbReference type="ChEBI" id="CHEBI:24875"/>
        <note>catalytic</note>
    </ligand>
</feature>
<feature type="binding site">
    <location>
        <position position="1066"/>
    </location>
    <ligand>
        <name>Fe cation</name>
        <dbReference type="ChEBI" id="CHEBI:24875"/>
        <note>catalytic</note>
    </ligand>
</feature>
<feature type="mutagenesis site" description="Reduces stimulation of LOX-activity by calcium and membrane binding. Abolishes stimulation of LOX-activity by calcium and membrane binding; when associated with A-419." evidence="4">
    <original>D</original>
    <variation>A</variation>
    <location>
        <position position="411"/>
    </location>
</feature>
<feature type="mutagenesis site" description="Reduces stimulation of LOX-activity by calcium and membrane binding." evidence="4">
    <original>W</original>
    <variation>A</variation>
    <location>
        <position position="413"/>
    </location>
</feature>
<feature type="mutagenesis site" description="Reduces stimulation of LOX-activity by calcium and membrane binding. Abolishes stimulation of LOX-activity by calcium and membrane binding; when associated with A-411." evidence="4">
    <original>E</original>
    <variation>A</variation>
    <location>
        <position position="419"/>
    </location>
</feature>
<feature type="mutagenesis site" description="Reduces LOX-activity in the absence of membranes and increases activity in the presence of liposomes. May alter protein structure." evidence="4">
    <original>W</original>
    <variation>A</variation>
    <location>
        <position position="449"/>
    </location>
</feature>
<feature type="helix" evidence="13">
    <location>
        <begin position="7"/>
        <end position="15"/>
    </location>
</feature>
<feature type="helix" evidence="13">
    <location>
        <begin position="17"/>
        <end position="27"/>
    </location>
</feature>
<feature type="turn" evidence="13">
    <location>
        <begin position="35"/>
        <end position="37"/>
    </location>
</feature>
<feature type="helix" evidence="13">
    <location>
        <begin position="38"/>
        <end position="59"/>
    </location>
</feature>
<feature type="turn" evidence="13">
    <location>
        <begin position="60"/>
        <end position="62"/>
    </location>
</feature>
<feature type="strand" evidence="13">
    <location>
        <begin position="65"/>
        <end position="67"/>
    </location>
</feature>
<feature type="strand" evidence="13">
    <location>
        <begin position="69"/>
        <end position="79"/>
    </location>
</feature>
<feature type="strand" evidence="13">
    <location>
        <begin position="89"/>
        <end position="91"/>
    </location>
</feature>
<feature type="strand" evidence="13">
    <location>
        <begin position="96"/>
        <end position="107"/>
    </location>
</feature>
<feature type="strand" evidence="13">
    <location>
        <begin position="113"/>
        <end position="115"/>
    </location>
</feature>
<feature type="strand" evidence="13">
    <location>
        <begin position="117"/>
        <end position="128"/>
    </location>
</feature>
<feature type="strand" evidence="13">
    <location>
        <begin position="133"/>
        <end position="141"/>
    </location>
</feature>
<feature type="helix" evidence="13">
    <location>
        <begin position="147"/>
        <end position="153"/>
    </location>
</feature>
<feature type="helix" evidence="13">
    <location>
        <begin position="160"/>
        <end position="166"/>
    </location>
</feature>
<feature type="helix" evidence="13">
    <location>
        <begin position="170"/>
        <end position="179"/>
    </location>
</feature>
<feature type="strand" evidence="13">
    <location>
        <begin position="181"/>
        <end position="183"/>
    </location>
</feature>
<feature type="helix" evidence="13">
    <location>
        <begin position="187"/>
        <end position="189"/>
    </location>
</feature>
<feature type="strand" evidence="13">
    <location>
        <begin position="198"/>
        <end position="201"/>
    </location>
</feature>
<feature type="strand" evidence="13">
    <location>
        <begin position="207"/>
        <end position="219"/>
    </location>
</feature>
<feature type="helix" evidence="13">
    <location>
        <begin position="223"/>
        <end position="225"/>
    </location>
</feature>
<feature type="helix" evidence="13">
    <location>
        <begin position="232"/>
        <end position="235"/>
    </location>
</feature>
<feature type="turn" evidence="13">
    <location>
        <begin position="236"/>
        <end position="239"/>
    </location>
</feature>
<feature type="helix" evidence="13">
    <location>
        <begin position="253"/>
        <end position="264"/>
    </location>
</feature>
<feature type="strand" evidence="13">
    <location>
        <begin position="267"/>
        <end position="277"/>
    </location>
</feature>
<feature type="helix" evidence="13">
    <location>
        <begin position="284"/>
        <end position="287"/>
    </location>
</feature>
<feature type="turn" evidence="13">
    <location>
        <begin position="295"/>
        <end position="297"/>
    </location>
</feature>
<feature type="strand" evidence="13">
    <location>
        <begin position="301"/>
        <end position="311"/>
    </location>
</feature>
<feature type="helix" evidence="13">
    <location>
        <begin position="314"/>
        <end position="319"/>
    </location>
</feature>
<feature type="strand" evidence="13">
    <location>
        <begin position="337"/>
        <end position="341"/>
    </location>
</feature>
<feature type="helix" evidence="13">
    <location>
        <begin position="344"/>
        <end position="362"/>
    </location>
</feature>
<feature type="turn" evidence="13">
    <location>
        <begin position="363"/>
        <end position="365"/>
    </location>
</feature>
<feature type="strand" evidence="15">
    <location>
        <begin position="374"/>
        <end position="382"/>
    </location>
</feature>
<feature type="strand" evidence="15">
    <location>
        <begin position="394"/>
        <end position="400"/>
    </location>
</feature>
<feature type="strand" evidence="15">
    <location>
        <begin position="408"/>
        <end position="410"/>
    </location>
</feature>
<feature type="strand" evidence="15">
    <location>
        <begin position="423"/>
        <end position="431"/>
    </location>
</feature>
<feature type="strand" evidence="15">
    <location>
        <begin position="434"/>
        <end position="443"/>
    </location>
</feature>
<feature type="strand" evidence="15">
    <location>
        <begin position="455"/>
        <end position="464"/>
    </location>
</feature>
<feature type="strand" evidence="16">
    <location>
        <begin position="467"/>
        <end position="469"/>
    </location>
</feature>
<feature type="strand" evidence="15">
    <location>
        <begin position="471"/>
        <end position="485"/>
    </location>
</feature>
<feature type="helix" evidence="15">
    <location>
        <begin position="499"/>
        <end position="515"/>
    </location>
</feature>
<feature type="helix" evidence="15">
    <location>
        <begin position="534"/>
        <end position="536"/>
    </location>
</feature>
<feature type="helix" evidence="15">
    <location>
        <begin position="539"/>
        <end position="541"/>
    </location>
</feature>
<feature type="helix" evidence="15">
    <location>
        <begin position="545"/>
        <end position="568"/>
    </location>
</feature>
<feature type="turn" evidence="15">
    <location>
        <begin position="569"/>
        <end position="571"/>
    </location>
</feature>
<feature type="helix" evidence="15">
    <location>
        <begin position="577"/>
        <end position="584"/>
    </location>
</feature>
<feature type="strand" evidence="15">
    <location>
        <begin position="590"/>
        <end position="592"/>
    </location>
</feature>
<feature type="turn" evidence="15">
    <location>
        <begin position="594"/>
        <end position="600"/>
    </location>
</feature>
<feature type="helix" evidence="15">
    <location>
        <begin position="602"/>
        <end position="611"/>
    </location>
</feature>
<feature type="helix" evidence="15">
    <location>
        <begin position="632"/>
        <end position="635"/>
    </location>
</feature>
<feature type="helix" evidence="15">
    <location>
        <begin position="636"/>
        <end position="638"/>
    </location>
</feature>
<feature type="helix" evidence="15">
    <location>
        <begin position="645"/>
        <end position="651"/>
    </location>
</feature>
<feature type="strand" evidence="15">
    <location>
        <begin position="654"/>
        <end position="658"/>
    </location>
</feature>
<feature type="helix" evidence="15">
    <location>
        <begin position="660"/>
        <end position="662"/>
    </location>
</feature>
<feature type="strand" evidence="15">
    <location>
        <begin position="698"/>
        <end position="703"/>
    </location>
</feature>
<feature type="strand" evidence="15">
    <location>
        <begin position="709"/>
        <end position="719"/>
    </location>
</feature>
<feature type="strand" evidence="14">
    <location>
        <begin position="721"/>
        <end position="724"/>
    </location>
</feature>
<feature type="helix" evidence="15">
    <location>
        <begin position="734"/>
        <end position="754"/>
    </location>
</feature>
<feature type="helix" evidence="15">
    <location>
        <begin position="755"/>
        <end position="761"/>
    </location>
</feature>
<feature type="helix" evidence="15">
    <location>
        <begin position="762"/>
        <end position="775"/>
    </location>
</feature>
<feature type="helix" evidence="15">
    <location>
        <begin position="781"/>
        <end position="790"/>
    </location>
</feature>
<feature type="helix" evidence="15">
    <location>
        <begin position="793"/>
        <end position="803"/>
    </location>
</feature>
<feature type="helix" evidence="15">
    <location>
        <begin position="810"/>
        <end position="814"/>
    </location>
</feature>
<feature type="turn" evidence="15">
    <location>
        <begin position="816"/>
        <end position="820"/>
    </location>
</feature>
<feature type="helix" evidence="15">
    <location>
        <begin position="821"/>
        <end position="830"/>
    </location>
</feature>
<feature type="helix" evidence="15">
    <location>
        <begin position="835"/>
        <end position="838"/>
    </location>
</feature>
<feature type="helix" evidence="15">
    <location>
        <begin position="840"/>
        <end position="846"/>
    </location>
</feature>
<feature type="turn" evidence="15">
    <location>
        <begin position="852"/>
        <end position="854"/>
    </location>
</feature>
<feature type="helix" evidence="15">
    <location>
        <begin position="859"/>
        <end position="882"/>
    </location>
</feature>
<feature type="helix" evidence="15">
    <location>
        <begin position="886"/>
        <end position="891"/>
    </location>
</feature>
<feature type="helix" evidence="15">
    <location>
        <begin position="893"/>
        <end position="905"/>
    </location>
</feature>
<feature type="strand" evidence="14">
    <location>
        <begin position="911"/>
        <end position="913"/>
    </location>
</feature>
<feature type="helix" evidence="15">
    <location>
        <begin position="925"/>
        <end position="939"/>
    </location>
</feature>
<feature type="helix" evidence="15">
    <location>
        <begin position="941"/>
        <end position="947"/>
    </location>
</feature>
<feature type="helix" evidence="15">
    <location>
        <begin position="950"/>
        <end position="954"/>
    </location>
</feature>
<feature type="helix" evidence="15">
    <location>
        <begin position="957"/>
        <end position="959"/>
    </location>
</feature>
<feature type="strand" evidence="15">
    <location>
        <begin position="970"/>
        <end position="973"/>
    </location>
</feature>
<feature type="helix" evidence="15">
    <location>
        <begin position="977"/>
        <end position="983"/>
    </location>
</feature>
<feature type="helix" evidence="15">
    <location>
        <begin position="987"/>
        <end position="1000"/>
    </location>
</feature>
<feature type="strand" evidence="14">
    <location>
        <begin position="1009"/>
        <end position="1011"/>
    </location>
</feature>
<feature type="helix" evidence="15">
    <location>
        <begin position="1021"/>
        <end position="1046"/>
    </location>
</feature>
<feature type="strand" evidence="16">
    <location>
        <begin position="1048"/>
        <end position="1050"/>
    </location>
</feature>
<feature type="helix" evidence="15">
    <location>
        <begin position="1057"/>
        <end position="1059"/>
    </location>
</feature>
<feature type="strand" evidence="15">
    <location>
        <begin position="1060"/>
        <end position="1063"/>
    </location>
</feature>
<reference key="1">
    <citation type="journal article" date="1997" name="Science">
        <title>Identification of a naturally occurring peroxidase-lipoxygenase fusion protein.</title>
        <authorList>
            <person name="Koljak R."/>
            <person name="Boutaud O."/>
            <person name="Shieh B.-H."/>
            <person name="Samel N."/>
            <person name="Brash A.R."/>
        </authorList>
    </citation>
    <scope>NUCLEOTIDE SEQUENCE [MRNA]</scope>
    <scope>FUNCTION</scope>
    <scope>CATALYTIC ACTIVITY</scope>
</reference>
<reference key="2">
    <citation type="journal article" date="1999" name="J. Biol. Chem.">
        <title>Purification and catalytic activities of the two domains of the allene oxide synthase-lipoxygenase fusion protein of the coral Plexaura homomalla.</title>
        <authorList>
            <person name="Boutaud O."/>
            <person name="Brash A.R."/>
        </authorList>
    </citation>
    <scope>FUNCTION</scope>
    <scope>CATALYTIC ACTIVITY</scope>
    <scope>ACTIVITY REGULATION</scope>
    <scope>BIOPHYSICOCHEMICAL PROPERTIES</scope>
</reference>
<reference key="3">
    <citation type="journal article" date="2001" name="Biochemistry">
        <title>Characterization of the coral allene oxide synthase active site with UV-visible absorption, magnetic circular dichroism, and electron paramagnetic resonance spectroscopy: evidence for tyrosinate ligation to the ferric enzyme heme iron.</title>
        <authorList>
            <person name="Abraham B.D."/>
            <person name="Sono M."/>
            <person name="Boutaud O."/>
            <person name="Shriner A."/>
            <person name="Dawson J.H."/>
            <person name="Brash A.R."/>
            <person name="Gaffney B.J."/>
        </authorList>
    </citation>
    <scope>HEME-BINDING</scope>
</reference>
<reference key="4">
    <citation type="journal article" date="2018" name="Methods Enzymol.">
        <title>Catalase-Related Allene Oxide Synthase, on a Biosynthetic Route to Fatty Acid Cyclopentenones: Expression and Assay of the Enzyme and Preparation of the 8R-HPETE Substrate.</title>
        <authorList>
            <person name="Brash A.R."/>
        </authorList>
    </citation>
    <scope>FUNCTION</scope>
    <scope>CATALYTIC ACTIVITY</scope>
</reference>
<reference key="5">
    <citation type="journal article" date="2005" name="J. Biol. Chem.">
        <title>Insights from the X-ray crystal structure of coral 8R-lipoxygenase: calcium activation via a C2-like domain and a structural basis of product chirality.</title>
        <authorList>
            <person name="Oldham M.L."/>
            <person name="Brash A.R."/>
            <person name="Newcomer M.E."/>
        </authorList>
    </citation>
    <scope>X-RAY CRYSTALLOGRAPHY (3.2 ANGSTROMS) OF 373-1066 IN COMPLEX WITH CALCIUM AND IRON IONS</scope>
    <scope>SUBCELLULAR LOCATION</scope>
    <scope>ACTIVITY REGULATION</scope>
    <scope>MUTAGENESIS OF ASP-411; TRP-413; GLU-419 AND TRP-449</scope>
</reference>
<reference key="6">
    <citation type="journal article" date="2005" name="Proc. Natl. Acad. Sci. U.S.A.">
        <title>The structure of coral allene oxide synthase reveals a catalase adapted for metabolism of a fatty acid hydroperoxide.</title>
        <authorList>
            <person name="Oldham M.L."/>
            <person name="Brash A.R."/>
            <person name="Newcomer M.E."/>
        </authorList>
    </citation>
    <scope>X-RAY CRYSTALLOGRAPHY (2.0 ANGSTROMS) OF 1-374 IN COMPLEX WITH HEME</scope>
    <scope>SUBUNIT</scope>
</reference>
<comment type="function">
    <text evidence="3 6 8">Bifunctional enzyme which is responsible for allene oxide biosynthesis via a two-step reaction; first the lipoxygenase reaction that converts polyunsaturated fatty acids such as arachidonate ((5Z,8Z,11Z,14Z)-eicosatetraenoate) into a (8R)-hydroperoxide intermediate ((8R)-hydroperoxy-(5Z,9E,11Z,14Z)-eicosatetraenoate) followed by the allene oxide synthase reaction that converts the hydroperoxide intermediate ((8R)-hydroperoxy-(5Z,9E,11Z,14Z)-eicosatetraenoate) into the allene oxide (8,9-epoxy-(5Z,9E,11Z,14Z)-eicosatetraenoate) (PubMed:10559269, PubMed:9302294). Shows preference for C20 or C22 highly polyunsaturated fatty acids and no activity with C18 fatty acids in vitro (PubMed:10559269). Fatty acid allene oxides are intermediates in the formation of cyclopentenones or hydrolytic products in marine systems, most notably the prostanoid-related clavulones (PubMed:29909837).</text>
</comment>
<comment type="catalytic activity">
    <reaction evidence="3 6">
        <text>(5Z,8Z,11Z,14Z)-eicosatetraenoate + O2 = (8R)-hydroperoxy-(5Z,9E,11Z,14Z)-eicosatetraenoate</text>
        <dbReference type="Rhea" id="RHEA:14985"/>
        <dbReference type="ChEBI" id="CHEBI:15379"/>
        <dbReference type="ChEBI" id="CHEBI:32395"/>
        <dbReference type="ChEBI" id="CHEBI:57447"/>
        <dbReference type="EC" id="1.13.11.40"/>
    </reaction>
    <physiologicalReaction direction="left-to-right" evidence="3 6">
        <dbReference type="Rhea" id="RHEA:14986"/>
    </physiologicalReaction>
</comment>
<comment type="catalytic activity">
    <reaction evidence="3 5 6">
        <text>(8R)-hydroperoxy-(5Z,9E,11Z,14Z)-eicosatetraenoate = 8,9-epoxy-(5Z,9E,11Z,14Z)-eicosatetraenoate + H2O</text>
        <dbReference type="Rhea" id="RHEA:51344"/>
        <dbReference type="ChEBI" id="CHEBI:15377"/>
        <dbReference type="ChEBI" id="CHEBI:57447"/>
        <dbReference type="ChEBI" id="CHEBI:134054"/>
    </reaction>
    <physiologicalReaction direction="left-to-right" evidence="3 5 6">
        <dbReference type="Rhea" id="RHEA:51345"/>
    </physiologicalReaction>
</comment>
<comment type="catalytic activity">
    <reaction evidence="10">
        <text>(5Z,8Z,11Z,14Z,17Z)-eicosapentaenoate + O2 = (8R)-hydroperoxy-(5Z,9E,11Z,14Z,17Z)-eicosapentaenoate</text>
        <dbReference type="Rhea" id="RHEA:51412"/>
        <dbReference type="ChEBI" id="CHEBI:15379"/>
        <dbReference type="ChEBI" id="CHEBI:58562"/>
        <dbReference type="ChEBI" id="CHEBI:134079"/>
    </reaction>
    <physiologicalReaction direction="left-to-right" evidence="10">
        <dbReference type="Rhea" id="RHEA:51413"/>
    </physiologicalReaction>
</comment>
<comment type="catalytic activity">
    <reaction evidence="3">
        <text>(4Z,7Z,10Z,13Z,16Z,19Z)-docosahexaenoate + O2 = 10-hydroperoxy-(4Z,7Z,11E,13Z,16Z,19Z)-docosahexaenoate</text>
        <dbReference type="Rhea" id="RHEA:51340"/>
        <dbReference type="ChEBI" id="CHEBI:15379"/>
        <dbReference type="ChEBI" id="CHEBI:77016"/>
        <dbReference type="ChEBI" id="CHEBI:134057"/>
    </reaction>
    <physiologicalReaction direction="left-to-right" evidence="3">
        <dbReference type="Rhea" id="RHEA:51341"/>
    </physiologicalReaction>
</comment>
<comment type="catalytic activity">
    <reaction evidence="10">
        <text>(8Z,11Z,14Z)-eicosatrienoate + O2 = (8R)-hydroperoxy-(9E,11Z,14Z)-eicosatrienoate</text>
        <dbReference type="Rhea" id="RHEA:51324"/>
        <dbReference type="ChEBI" id="CHEBI:15379"/>
        <dbReference type="ChEBI" id="CHEBI:71589"/>
        <dbReference type="ChEBI" id="CHEBI:134051"/>
    </reaction>
    <physiologicalReaction direction="left-to-right" evidence="10">
        <dbReference type="Rhea" id="RHEA:51325"/>
    </physiologicalReaction>
</comment>
<comment type="catalytic activity">
    <reaction evidence="3">
        <text>(8Z,11Z,14Z)-eicosatrienoate + O2 = 10-hydroperoxy-(8Z,11Z,14Z)-eicosatrienoate</text>
        <dbReference type="Rhea" id="RHEA:51328"/>
        <dbReference type="ChEBI" id="CHEBI:15379"/>
        <dbReference type="ChEBI" id="CHEBI:71589"/>
        <dbReference type="ChEBI" id="CHEBI:134052"/>
    </reaction>
    <physiologicalReaction direction="left-to-right" evidence="3">
        <dbReference type="Rhea" id="RHEA:51329"/>
    </physiologicalReaction>
</comment>
<comment type="catalytic activity">
    <reaction evidence="3">
        <text>(8Z,11Z,14Z)-eicosatrienoate + O2 = 11-hydroperoxy-(8Z,12E,14Z)-eicosatrienoate</text>
        <dbReference type="Rhea" id="RHEA:51332"/>
        <dbReference type="ChEBI" id="CHEBI:15379"/>
        <dbReference type="ChEBI" id="CHEBI:71589"/>
        <dbReference type="ChEBI" id="CHEBI:134053"/>
    </reaction>
    <physiologicalReaction direction="left-to-right" evidence="3">
        <dbReference type="Rhea" id="RHEA:51333"/>
    </physiologicalReaction>
</comment>
<comment type="cofactor">
    <cofactor>
        <name>Ca(2+)</name>
        <dbReference type="ChEBI" id="CHEBI:29108"/>
    </cofactor>
    <text>Binds 2 calcium ions per subunit.</text>
</comment>
<comment type="cofactor">
    <cofactor>
        <name>Fe cation</name>
        <dbReference type="ChEBI" id="CHEBI:24875"/>
    </cofactor>
    <text>Binds 1 Fe cation per subunit.</text>
</comment>
<comment type="cofactor">
    <cofactor>
        <name>heme</name>
        <dbReference type="ChEBI" id="CHEBI:30413"/>
    </cofactor>
    <text>Binds 1 heme group per subunit.</text>
</comment>
<comment type="activity regulation">
    <text evidence="3 4">Lipoxygenase activity is stimulated by calcium, sodium, lithium and potassium ions. Calcium binding promotes interaction with membranes and thus facilitates access to substrates.</text>
</comment>
<comment type="biophysicochemical properties">
    <kinetics>
        <KM evidence="3">45.28 uM for arachidonate ((5Z,8Z,11Z,14Z)-eicosatetraenoate)</KM>
    </kinetics>
    <phDependence>
        <text evidence="3">Optimum pH is 7.0.</text>
    </phDependence>
</comment>
<comment type="pathway">
    <text>Lipid metabolism; arachidonate metabolism.</text>
</comment>
<comment type="pathway">
    <text>Lipid metabolism; fatty acid metabolism.</text>
</comment>
<comment type="subunit">
    <text evidence="11 12">Dimer.</text>
</comment>
<comment type="subcellular location">
    <subcellularLocation>
        <location evidence="2 4">Cytoplasm</location>
    </subcellularLocation>
    <subcellularLocation>
        <location evidence="4">Membrane</location>
        <topology evidence="4">Peripheral membrane protein</topology>
    </subcellularLocation>
    <text>Calcium binding promotes binding to membranes.</text>
</comment>
<comment type="similarity">
    <text evidence="9">In the C-terminal section; belongs to the lipoxygenase family.</text>
</comment>
<name>AOSL_PLEHO</name>
<dbReference type="EC" id="4.2.1.-" evidence="3 5 6"/>
<dbReference type="EC" id="1.13.11.40" evidence="3 6"/>
<dbReference type="EMBL" id="AF003692">
    <property type="protein sequence ID" value="AAC47743.1"/>
    <property type="molecule type" value="mRNA"/>
</dbReference>
<dbReference type="PIR" id="T30903">
    <property type="entry name" value="T30903"/>
</dbReference>
<dbReference type="PDB" id="1U5U">
    <property type="method" value="X-ray"/>
    <property type="resolution" value="2.00 A"/>
    <property type="chains" value="A/B=1-374"/>
</dbReference>
<dbReference type="PDB" id="2FNQ">
    <property type="method" value="X-ray"/>
    <property type="resolution" value="3.20 A"/>
    <property type="chains" value="A/B=374-1066"/>
</dbReference>
<dbReference type="PDB" id="3DY5">
    <property type="method" value="X-ray"/>
    <property type="resolution" value="3.51 A"/>
    <property type="chains" value="A/C=1-1066"/>
</dbReference>
<dbReference type="PDB" id="3FG1">
    <property type="method" value="X-ray"/>
    <property type="resolution" value="1.85 A"/>
    <property type="chains" value="A/B/C/D=374-1066"/>
</dbReference>
<dbReference type="PDB" id="3FG3">
    <property type="method" value="X-ray"/>
    <property type="resolution" value="1.90 A"/>
    <property type="chains" value="A/B/C/D=374-1066"/>
</dbReference>
<dbReference type="PDB" id="3FG4">
    <property type="method" value="X-ray"/>
    <property type="resolution" value="2.31 A"/>
    <property type="chains" value="A/B/C/D=374-1066"/>
</dbReference>
<dbReference type="PDB" id="4QWT">
    <property type="method" value="X-ray"/>
    <property type="resolution" value="2.00 A"/>
    <property type="chains" value="A/B/C/D=374-1066"/>
</dbReference>
<dbReference type="PDBsum" id="1U5U"/>
<dbReference type="PDBsum" id="2FNQ"/>
<dbReference type="PDBsum" id="3DY5"/>
<dbReference type="PDBsum" id="3FG1"/>
<dbReference type="PDBsum" id="3FG3"/>
<dbReference type="PDBsum" id="3FG4"/>
<dbReference type="PDBsum" id="4QWT"/>
<dbReference type="SMR" id="O16025"/>
<dbReference type="SwissLipids" id="SLP:000001660"/>
<dbReference type="PeroxiBase" id="5626">
    <property type="entry name" value="PhoKatLox01"/>
</dbReference>
<dbReference type="KEGG" id="ag:AAC47743"/>
<dbReference type="BRENDA" id="1.13.11.40">
    <property type="organism ID" value="4917"/>
</dbReference>
<dbReference type="UniPathway" id="UPA00199"/>
<dbReference type="UniPathway" id="UPA00383"/>
<dbReference type="EvolutionaryTrace" id="O16025"/>
<dbReference type="GO" id="GO:0005737">
    <property type="term" value="C:cytoplasm"/>
    <property type="evidence" value="ECO:0007669"/>
    <property type="project" value="UniProtKB-SubCell"/>
</dbReference>
<dbReference type="GO" id="GO:0016020">
    <property type="term" value="C:membrane"/>
    <property type="evidence" value="ECO:0007669"/>
    <property type="project" value="UniProtKB-SubCell"/>
</dbReference>
<dbReference type="GO" id="GO:0009978">
    <property type="term" value="F:allene oxide synthase activity"/>
    <property type="evidence" value="ECO:0007669"/>
    <property type="project" value="UniProtKB-EC"/>
</dbReference>
<dbReference type="GO" id="GO:0047677">
    <property type="term" value="F:arachidonate 8(R)-lipoxygenase activity"/>
    <property type="evidence" value="ECO:0007669"/>
    <property type="project" value="UniProtKB-EC"/>
</dbReference>
<dbReference type="GO" id="GO:0020037">
    <property type="term" value="F:heme binding"/>
    <property type="evidence" value="ECO:0007669"/>
    <property type="project" value="InterPro"/>
</dbReference>
<dbReference type="GO" id="GO:0005506">
    <property type="term" value="F:iron ion binding"/>
    <property type="evidence" value="ECO:0007669"/>
    <property type="project" value="InterPro"/>
</dbReference>
<dbReference type="GO" id="GO:0019369">
    <property type="term" value="P:arachidonate metabolic process"/>
    <property type="evidence" value="ECO:0007669"/>
    <property type="project" value="UniProtKB-UniPathway"/>
</dbReference>
<dbReference type="GO" id="GO:0006633">
    <property type="term" value="P:fatty acid biosynthetic process"/>
    <property type="evidence" value="ECO:0007669"/>
    <property type="project" value="UniProtKB-KW"/>
</dbReference>
<dbReference type="GO" id="GO:0034440">
    <property type="term" value="P:lipid oxidation"/>
    <property type="evidence" value="ECO:0007669"/>
    <property type="project" value="InterPro"/>
</dbReference>
<dbReference type="GO" id="GO:0031408">
    <property type="term" value="P:oxylipin biosynthetic process"/>
    <property type="evidence" value="ECO:0007669"/>
    <property type="project" value="UniProtKB-KW"/>
</dbReference>
<dbReference type="CDD" id="cd08151">
    <property type="entry name" value="AOS"/>
    <property type="match status" value="1"/>
</dbReference>
<dbReference type="FunFam" id="1.20.245.10:FF:000001">
    <property type="entry name" value="Arachidonate 5-lipoxygenase a"/>
    <property type="match status" value="1"/>
</dbReference>
<dbReference type="Gene3D" id="3.10.450.60">
    <property type="match status" value="1"/>
</dbReference>
<dbReference type="Gene3D" id="2.40.180.10">
    <property type="entry name" value="Catalase core domain"/>
    <property type="match status" value="1"/>
</dbReference>
<dbReference type="Gene3D" id="1.20.245.10">
    <property type="entry name" value="Lipoxygenase-1, Domain 5"/>
    <property type="match status" value="1"/>
</dbReference>
<dbReference type="InterPro" id="IPR020835">
    <property type="entry name" value="Catalase_sf"/>
</dbReference>
<dbReference type="InterPro" id="IPR000907">
    <property type="entry name" value="LipOase"/>
</dbReference>
<dbReference type="InterPro" id="IPR013819">
    <property type="entry name" value="LipOase_C"/>
</dbReference>
<dbReference type="InterPro" id="IPR036226">
    <property type="entry name" value="LipOase_C_sf"/>
</dbReference>
<dbReference type="InterPro" id="IPR020834">
    <property type="entry name" value="LipOase_CS"/>
</dbReference>
<dbReference type="InterPro" id="IPR020833">
    <property type="entry name" value="LipOase_Fe_BS"/>
</dbReference>
<dbReference type="InterPro" id="IPR001885">
    <property type="entry name" value="LipOase_mml"/>
</dbReference>
<dbReference type="InterPro" id="IPR001024">
    <property type="entry name" value="PLAT/LH2_dom"/>
</dbReference>
<dbReference type="InterPro" id="IPR036392">
    <property type="entry name" value="PLAT/LH2_dom_sf"/>
</dbReference>
<dbReference type="PANTHER" id="PTHR11771">
    <property type="entry name" value="LIPOXYGENASE"/>
    <property type="match status" value="1"/>
</dbReference>
<dbReference type="Pfam" id="PF00305">
    <property type="entry name" value="Lipoxygenase"/>
    <property type="match status" value="1"/>
</dbReference>
<dbReference type="Pfam" id="PF01477">
    <property type="entry name" value="PLAT"/>
    <property type="match status" value="1"/>
</dbReference>
<dbReference type="PRINTS" id="PR00087">
    <property type="entry name" value="LIPOXYGENASE"/>
</dbReference>
<dbReference type="PRINTS" id="PR00467">
    <property type="entry name" value="MAMLPOXGNASE"/>
</dbReference>
<dbReference type="SMART" id="SM00308">
    <property type="entry name" value="LH2"/>
    <property type="match status" value="1"/>
</dbReference>
<dbReference type="SUPFAM" id="SSF56634">
    <property type="entry name" value="Heme-dependent catalase-like"/>
    <property type="match status" value="1"/>
</dbReference>
<dbReference type="SUPFAM" id="SSF49723">
    <property type="entry name" value="Lipase/lipooxygenase domain (PLAT/LH2 domain)"/>
    <property type="match status" value="1"/>
</dbReference>
<dbReference type="SUPFAM" id="SSF48484">
    <property type="entry name" value="Lipoxigenase"/>
    <property type="match status" value="1"/>
</dbReference>
<dbReference type="PROSITE" id="PS00711">
    <property type="entry name" value="LIPOXYGENASE_1"/>
    <property type="match status" value="1"/>
</dbReference>
<dbReference type="PROSITE" id="PS00081">
    <property type="entry name" value="LIPOXYGENASE_2"/>
    <property type="match status" value="1"/>
</dbReference>
<dbReference type="PROSITE" id="PS51393">
    <property type="entry name" value="LIPOXYGENASE_3"/>
    <property type="match status" value="1"/>
</dbReference>
<dbReference type="PROSITE" id="PS50095">
    <property type="entry name" value="PLAT"/>
    <property type="match status" value="1"/>
</dbReference>
<organism>
    <name type="scientific">Plexaura homomalla</name>
    <name type="common">Black sea rod</name>
    <dbReference type="NCBI Taxonomy" id="47982"/>
    <lineage>
        <taxon>Eukaryota</taxon>
        <taxon>Metazoa</taxon>
        <taxon>Cnidaria</taxon>
        <taxon>Anthozoa</taxon>
        <taxon>Octocorallia</taxon>
        <taxon>Malacalcyonacea</taxon>
        <taxon>Plexauridae</taxon>
        <taxon>Plexaura</taxon>
    </lineage>
</organism>
<accession>O16025</accession>
<keyword id="KW-0002">3D-structure</keyword>
<keyword id="KW-0106">Calcium</keyword>
<keyword id="KW-0963">Cytoplasm</keyword>
<keyword id="KW-0223">Dioxygenase</keyword>
<keyword id="KW-0275">Fatty acid biosynthesis</keyword>
<keyword id="KW-0276">Fatty acid metabolism</keyword>
<keyword id="KW-0349">Heme</keyword>
<keyword id="KW-0408">Iron</keyword>
<keyword id="KW-0444">Lipid biosynthesis</keyword>
<keyword id="KW-0443">Lipid metabolism</keyword>
<keyword id="KW-0456">Lyase</keyword>
<keyword id="KW-0472">Membrane</keyword>
<keyword id="KW-0479">Metal-binding</keyword>
<keyword id="KW-0511">Multifunctional enzyme</keyword>
<keyword id="KW-0560">Oxidoreductase</keyword>
<keyword id="KW-0925">Oxylipin biosynthesis</keyword>
<sequence length="1066" mass="121783">MTWKNFGFEIFGEKYGQEELEKRIKDEHTPPPDSPVFGGLKLKLKKEKFKTLFTLGTTLKGFRRATHTVGTGGIGEITIVNDPKFPEHEFFTAGRTFPARLRHANLKYPDDAGADARSFSIKFADSDSDGPLDIVMNTGEANIFWNSPSLEDFVPVEEGDAAEEYVYKNPYYYYNLVEALRRAPDTFAHLYYYSQVTMPFKAKDGKVRYCRYRALPGDVDIKEEDESGRLTEEEQRKIWIFSRHENEKRPDDYLRKEYVERLQKGPVNYRLQIQIHEASPDDTATIFHAGILWDKETHPWFDLAKVSIKTPLSPDVLEKTAFNIANQPASLGLLEAKSPEDYNSIGELRVAVYTWVQHLRKLKIGSLVPAGQNAIYNVEVETGDREHAGTDATITIRITGAKGRTDYLKLDKWFHNDFEAGSKEQYTVQGFDVGDIQLIELHSDGGGYWSGDPDWFVNRVIIISSTQDRVYSFPCFRWVIKDMVLFPGEATLPFNEVPAIVSEQRQKELEQRKLTYQWDYVSDDMPGNIKAKTHDDLPRDVQFTDEKSRSYQESRKAALVNLGIGSLFTMFENWDSYDDYHILYRNWILGGTPNMADRWHEDRWFGYQFLNGANPVILTRCDALPSNFPVTNEHVNASLDRGKNLDEEIKDGHIYIVDFKVLVGAKSYGGPVLEDIGYKVPDHLKHDEADIRYCAAPLALFYVNKLGHLMPIAIQINQEPGPENPIWTPHEENEHDWMMAKFWLGVAESNFHQLNTHLLRTHLTTESFALSTWRNLASAHPVFKLLQPHIYGVLAIDTIGRKELIGSGGIVDQSLSLGGGGHVTFMEKCFKEVNLQDYHLPNALKKRGVDDPSKLPGFYYRDDGLALWEAIETFIGEIIAIFYKNDDDVKRDNEIQSWIYDVHKNGWRVNPGHQDHGVPASFESREQLKEVLTSLVFTFSCQHAAVNFSQKDHYGFTPNAPAVLRHPPPKKKGEATLQSILSTLPSKSQAAKAIATVYILTKFSEDERYLGNYSATAWEDKDALDAINRFQDKLEDISKKIKQRNENLEVPYIYLLPERIPNGTAI</sequence>
<proteinExistence type="evidence at protein level"/>
<protein>
    <recommendedName>
        <fullName evidence="7">Allene oxide synthase-lipoxygenase protein</fullName>
    </recommendedName>
    <domain>
        <recommendedName>
            <fullName>Allene oxide synthase</fullName>
            <shortName>AOS</shortName>
            <ecNumber evidence="3 5 6">4.2.1.-</ecNumber>
        </recommendedName>
        <alternativeName>
            <fullName>Hydroperoxidehydrase</fullName>
        </alternativeName>
    </domain>
    <domain>
        <recommendedName>
            <fullName>Arachidonate 8-lipoxygenase</fullName>
            <ecNumber evidence="3 6">1.13.11.40</ecNumber>
        </recommendedName>
    </domain>
</protein>